<dbReference type="EMBL" id="X56910">
    <property type="protein sequence ID" value="CAA40231.1"/>
    <property type="molecule type" value="Genomic_DNA"/>
</dbReference>
<dbReference type="PIR" id="S12921">
    <property type="entry name" value="S12921"/>
</dbReference>
<dbReference type="SMR" id="P23637"/>
<dbReference type="GO" id="GO:0005737">
    <property type="term" value="C:cytoplasm"/>
    <property type="evidence" value="ECO:0007669"/>
    <property type="project" value="UniProtKB-SubCell"/>
</dbReference>
<dbReference type="GO" id="GO:0005525">
    <property type="term" value="F:GTP binding"/>
    <property type="evidence" value="ECO:0007669"/>
    <property type="project" value="UniProtKB-KW"/>
</dbReference>
<dbReference type="GO" id="GO:0003924">
    <property type="term" value="F:GTPase activity"/>
    <property type="evidence" value="ECO:0007669"/>
    <property type="project" value="InterPro"/>
</dbReference>
<dbReference type="GO" id="GO:0003747">
    <property type="term" value="F:translation release factor activity"/>
    <property type="evidence" value="ECO:0007669"/>
    <property type="project" value="InterPro"/>
</dbReference>
<dbReference type="GO" id="GO:0000288">
    <property type="term" value="P:nuclear-transcribed mRNA catabolic process, deadenylation-dependent decay"/>
    <property type="evidence" value="ECO:0007669"/>
    <property type="project" value="InterPro"/>
</dbReference>
<dbReference type="CDD" id="cd01883">
    <property type="entry name" value="EF1_alpha"/>
    <property type="match status" value="1"/>
</dbReference>
<dbReference type="CDD" id="cd03704">
    <property type="entry name" value="eRF3_C_III"/>
    <property type="match status" value="1"/>
</dbReference>
<dbReference type="CDD" id="cd04089">
    <property type="entry name" value="eRF3_II"/>
    <property type="match status" value="1"/>
</dbReference>
<dbReference type="FunFam" id="2.40.30.10:FF:000017">
    <property type="entry name" value="Eukaryotic peptide chain release factor GTP-binding subunit"/>
    <property type="match status" value="1"/>
</dbReference>
<dbReference type="FunFam" id="3.40.50.300:FF:000503">
    <property type="entry name" value="Peptide chain release factor subunit 3"/>
    <property type="match status" value="1"/>
</dbReference>
<dbReference type="FunFam" id="2.40.30.10:FF:000020">
    <property type="entry name" value="Translation elongation factor EF-1"/>
    <property type="match status" value="1"/>
</dbReference>
<dbReference type="Gene3D" id="3.40.50.300">
    <property type="entry name" value="P-loop containing nucleotide triphosphate hydrolases"/>
    <property type="match status" value="1"/>
</dbReference>
<dbReference type="Gene3D" id="2.40.30.10">
    <property type="entry name" value="Translation factors"/>
    <property type="match status" value="2"/>
</dbReference>
<dbReference type="InterPro" id="IPR004161">
    <property type="entry name" value="EFTu-like_2"/>
</dbReference>
<dbReference type="InterPro" id="IPR031157">
    <property type="entry name" value="G_TR_CS"/>
</dbReference>
<dbReference type="InterPro" id="IPR054696">
    <property type="entry name" value="GTP-eEF1A_C"/>
</dbReference>
<dbReference type="InterPro" id="IPR027417">
    <property type="entry name" value="P-loop_NTPase"/>
</dbReference>
<dbReference type="InterPro" id="IPR003285">
    <property type="entry name" value="Sup35"/>
</dbReference>
<dbReference type="InterPro" id="IPR000795">
    <property type="entry name" value="T_Tr_GTP-bd_dom"/>
</dbReference>
<dbReference type="InterPro" id="IPR050100">
    <property type="entry name" value="TRAFAC_GTPase_members"/>
</dbReference>
<dbReference type="InterPro" id="IPR009000">
    <property type="entry name" value="Transl_B-barrel_sf"/>
</dbReference>
<dbReference type="InterPro" id="IPR009001">
    <property type="entry name" value="Transl_elong_EF1A/Init_IF2_C"/>
</dbReference>
<dbReference type="PANTHER" id="PTHR23115">
    <property type="entry name" value="TRANSLATION FACTOR"/>
    <property type="match status" value="1"/>
</dbReference>
<dbReference type="Pfam" id="PF22594">
    <property type="entry name" value="GTP-eEF1A_C"/>
    <property type="match status" value="1"/>
</dbReference>
<dbReference type="Pfam" id="PF00009">
    <property type="entry name" value="GTP_EFTU"/>
    <property type="match status" value="1"/>
</dbReference>
<dbReference type="Pfam" id="PF03144">
    <property type="entry name" value="GTP_EFTU_D2"/>
    <property type="match status" value="1"/>
</dbReference>
<dbReference type="PRINTS" id="PR00315">
    <property type="entry name" value="ELONGATNFCT"/>
</dbReference>
<dbReference type="PRINTS" id="PR01343">
    <property type="entry name" value="YEASTERF"/>
</dbReference>
<dbReference type="SUPFAM" id="SSF50465">
    <property type="entry name" value="EF-Tu/eEF-1alpha/eIF2-gamma C-terminal domain"/>
    <property type="match status" value="1"/>
</dbReference>
<dbReference type="SUPFAM" id="SSF52540">
    <property type="entry name" value="P-loop containing nucleoside triphosphate hydrolases"/>
    <property type="match status" value="1"/>
</dbReference>
<dbReference type="SUPFAM" id="SSF50447">
    <property type="entry name" value="Translation proteins"/>
    <property type="match status" value="1"/>
</dbReference>
<dbReference type="PROSITE" id="PS00301">
    <property type="entry name" value="G_TR_1"/>
    <property type="match status" value="1"/>
</dbReference>
<dbReference type="PROSITE" id="PS51722">
    <property type="entry name" value="G_TR_2"/>
    <property type="match status" value="1"/>
</dbReference>
<gene>
    <name type="primary">SUP2</name>
</gene>
<protein>
    <recommendedName>
        <fullName>Eukaryotic peptide chain release factor GTP-binding subunit</fullName>
    </recommendedName>
    <alternativeName>
        <fullName>ERF-3</fullName>
        <shortName>ERF3</shortName>
    </alternativeName>
    <alternativeName>
        <fullName>ERF2</fullName>
    </alternativeName>
    <alternativeName>
        <fullName>Omnipotent suppressor protein 2</fullName>
    </alternativeName>
    <alternativeName>
        <fullName>Polypeptide release factor 3</fullName>
    </alternativeName>
    <alternativeName>
        <fullName>Translation release factor 3</fullName>
    </alternativeName>
</protein>
<evidence type="ECO:0000250" key="1"/>
<evidence type="ECO:0000255" key="2">
    <source>
        <dbReference type="PROSITE-ProRule" id="PRU01059"/>
    </source>
</evidence>
<evidence type="ECO:0000256" key="3">
    <source>
        <dbReference type="SAM" id="MobiDB-lite"/>
    </source>
</evidence>
<evidence type="ECO:0000305" key="4"/>
<reference key="1">
    <citation type="journal article" date="1990" name="Yeast">
        <title>Divergence and conservation of SUP2 (SUP35) gene of yeast Pichia pinus and Saccharomyces cerevisiae.</title>
        <authorList>
            <person name="Kushnirov V.V."/>
            <person name="Ter-Avanesyan M.D."/>
            <person name="Didichenko S.A."/>
            <person name="Smirnov V.N."/>
            <person name="Chernoff Y.O."/>
            <person name="Derkach I.L."/>
            <person name="Novikova O.N."/>
            <person name="Inge-Vechtomov S.G."/>
            <person name="Neistat M.A."/>
            <person name="Tolstorukov I.I."/>
        </authorList>
    </citation>
    <scope>NUCLEOTIDE SEQUENCE [GENOMIC DNA]</scope>
    <source>
        <strain>MH4</strain>
    </source>
</reference>
<organism>
    <name type="scientific">Ogataea pini</name>
    <name type="common">Yeast</name>
    <name type="synonym">Pichia pinus</name>
    <dbReference type="NCBI Taxonomy" id="4923"/>
    <lineage>
        <taxon>Eukaryota</taxon>
        <taxon>Fungi</taxon>
        <taxon>Dikarya</taxon>
        <taxon>Ascomycota</taxon>
        <taxon>Saccharomycotina</taxon>
        <taxon>Pichiomycetes</taxon>
        <taxon>Pichiales</taxon>
        <taxon>Pichiaceae</taxon>
        <taxon>Ogataea</taxon>
    </lineage>
</organism>
<comment type="function">
    <text>Involved in translation termination. Stimulates the activity of ERF1. Binds guanine nucleotides.</text>
</comment>
<comment type="subcellular location">
    <subcellularLocation>
        <location evidence="4">Cytoplasm</location>
    </subcellularLocation>
</comment>
<comment type="similarity">
    <text evidence="2">Belongs to the TRAFAC class translation factor GTPase superfamily. Classic translation factor GTPase family. ERF3 subfamily.</text>
</comment>
<accession>P23637</accession>
<keyword id="KW-0963">Cytoplasm</keyword>
<keyword id="KW-0342">GTP-binding</keyword>
<keyword id="KW-0547">Nucleotide-binding</keyword>
<keyword id="KW-0597">Phosphoprotein</keyword>
<keyword id="KW-0648">Protein biosynthesis</keyword>
<keyword id="KW-0677">Repeat</keyword>
<proteinExistence type="inferred from homology"/>
<sequence>MSQDQQQQQQFNANNLAGNVQNINLNAPAYDPAVQSYIPNTAQAFVPSAQPYIPGQQEQQFGQYGQQQQNYNQGGYNNYNNRGGYSNNRGGYNNSNRGGYSNYNSYNTNSNQGGYSNYNNNYANNSYNNNNNYNNNYNQGYNNYNSQPQGQDQQQETGSGQMSLEDYQKQQKESLNKLNTKPKKVLKLNLNSSTVKAPIVTKKKEEEPVNQESKTEEPAKEEIKNQEPAEAENKVEEESKVEAPTAAKPVSESEFPASTPKTEAKASKEVAAAAAALKKEVSQAKKESNVTNADALVKEQEEQIDASIVNDMFGGKDHMSIIFMGHVDAGKSTMGGNLLFLTGAVDKRTVEKYEREAKDAGRQGWYLSWIMDTNKEERNDGKTIEVGKSYFETDKRRYTILDAPGHKLYISEMIGGASQADVGVLVISSRKGEYEAGFERGGQSREHAILAKTQGVNKLVVVINKMDDPTVNWSKERYEECTTKLAMYLKGVGYQKGDVLFMPVSGYTGAGLKERVSQKDAPWYNGPSLLEYLDSMPLAVRKINDPFMLPISSKMKDLGTVIEGKIESGHVKKGQNLLVMPNKTQVEVTTIYNETEAEADSAFCGEQVRLRLRGIEEEDLSAGYVLSSINHPVKTVTRFEAQIAIVELKSILSTGFSCVMHVHTAIEEVTFTQLLHNLQKGTNRRSKKAPAFAKQGMKIIAVLETTEPVCIESYDDYPQLGRFTLRDQGQTIAIGKVTKLL</sequence>
<feature type="chain" id="PRO_0000091487" description="Eukaryotic peptide chain release factor GTP-binding subunit">
    <location>
        <begin position="1"/>
        <end position="741"/>
    </location>
</feature>
<feature type="domain" description="tr-type G" evidence="2">
    <location>
        <begin position="316"/>
        <end position="541"/>
    </location>
</feature>
<feature type="region of interest" description="Several sort of repeats">
    <location>
        <begin position="5"/>
        <end position="135"/>
    </location>
</feature>
<feature type="region of interest" description="Disordered" evidence="3">
    <location>
        <begin position="59"/>
        <end position="186"/>
    </location>
</feature>
<feature type="region of interest" description="Charged">
    <location>
        <begin position="162"/>
        <end position="311"/>
    </location>
</feature>
<feature type="region of interest" description="Disordered" evidence="3">
    <location>
        <begin position="199"/>
        <end position="264"/>
    </location>
</feature>
<feature type="region of interest" description="G1" evidence="2">
    <location>
        <begin position="325"/>
        <end position="332"/>
    </location>
</feature>
<feature type="region of interest" description="G2" evidence="2">
    <location>
        <begin position="381"/>
        <end position="385"/>
    </location>
</feature>
<feature type="region of interest" description="G3" evidence="2">
    <location>
        <begin position="402"/>
        <end position="405"/>
    </location>
</feature>
<feature type="region of interest" description="G4" evidence="2">
    <location>
        <begin position="464"/>
        <end position="467"/>
    </location>
</feature>
<feature type="region of interest" description="G5" evidence="2">
    <location>
        <begin position="505"/>
        <end position="507"/>
    </location>
</feature>
<feature type="compositionally biased region" description="Low complexity" evidence="3">
    <location>
        <begin position="59"/>
        <end position="161"/>
    </location>
</feature>
<feature type="compositionally biased region" description="Basic and acidic residues" evidence="3">
    <location>
        <begin position="166"/>
        <end position="175"/>
    </location>
</feature>
<feature type="compositionally biased region" description="Basic and acidic residues" evidence="3">
    <location>
        <begin position="202"/>
        <end position="241"/>
    </location>
</feature>
<feature type="binding site" evidence="1">
    <location>
        <begin position="325"/>
        <end position="332"/>
    </location>
    <ligand>
        <name>GTP</name>
        <dbReference type="ChEBI" id="CHEBI:37565"/>
    </ligand>
</feature>
<feature type="binding site" evidence="1">
    <location>
        <begin position="402"/>
        <end position="406"/>
    </location>
    <ligand>
        <name>GTP</name>
        <dbReference type="ChEBI" id="CHEBI:37565"/>
    </ligand>
</feature>
<feature type="binding site" evidence="1">
    <location>
        <begin position="464"/>
        <end position="467"/>
    </location>
    <ligand>
        <name>GTP</name>
        <dbReference type="ChEBI" id="CHEBI:37565"/>
    </ligand>
</feature>
<feature type="modified residue" description="Phosphothreonine" evidence="1">
    <location>
        <position position="399"/>
    </location>
</feature>
<name>ERF3_OGAPI</name>